<keyword id="KW-0274">FAD</keyword>
<keyword id="KW-0285">Flavoprotein</keyword>
<keyword id="KW-0474">Menaquinone biosynthesis</keyword>
<keyword id="KW-0560">Oxidoreductase</keyword>
<keyword id="KW-1185">Reference proteome</keyword>
<comment type="function">
    <text evidence="1">Catalyzes the reduction of a single double bond in the isoprenoid tail of menaquinone (MK-9) in M.tuberculosis, likely the beta-isoprene unit, forming the predominant form of menaquinone found in mycobacteria, MK-9(II-H2).</text>
</comment>
<comment type="catalytic activity">
    <reaction evidence="1">
        <text>menaquinone-9 + AH2 = beta-dihydromenaquinone-9 + A</text>
        <dbReference type="Rhea" id="RHEA:51924"/>
        <dbReference type="ChEBI" id="CHEBI:13193"/>
        <dbReference type="ChEBI" id="CHEBI:17499"/>
        <dbReference type="ChEBI" id="CHEBI:44147"/>
        <dbReference type="ChEBI" id="CHEBI:134607"/>
        <dbReference type="EC" id="1.3.99.38"/>
    </reaction>
</comment>
<comment type="cofactor">
    <cofactor evidence="2">
        <name>FAD</name>
        <dbReference type="ChEBI" id="CHEBI:57692"/>
    </cofactor>
</comment>
<comment type="pathway">
    <text evidence="1">Quinol/quinone metabolism; menaquinone biosynthesis.</text>
</comment>
<comment type="similarity">
    <text evidence="3">Belongs to the geranylgeranyl reductase family.</text>
</comment>
<proteinExistence type="inferred from homology"/>
<accession>P9WNY8</accession>
<accession>F2GMK6</accession>
<accession>L0T5R0</accession>
<accession>O06427</accession>
<accession>Q7D9M7</accession>
<protein>
    <recommendedName>
        <fullName evidence="1">Menaquinone reductase</fullName>
        <shortName evidence="1">MK reductase</shortName>
        <ecNumber evidence="1">1.3.99.38</ecNumber>
    </recommendedName>
</protein>
<feature type="chain" id="PRO_0000427044" description="Menaquinone reductase">
    <location>
        <begin position="1"/>
        <end position="408"/>
    </location>
</feature>
<feature type="binding site" evidence="2">
    <location>
        <begin position="13"/>
        <end position="17"/>
    </location>
    <ligand>
        <name>FAD</name>
        <dbReference type="ChEBI" id="CHEBI:57692"/>
    </ligand>
</feature>
<feature type="binding site" evidence="2">
    <location>
        <begin position="46"/>
        <end position="49"/>
    </location>
    <ligand>
        <name>FAD</name>
        <dbReference type="ChEBI" id="CHEBI:57692"/>
    </ligand>
</feature>
<feature type="binding site" evidence="2">
    <location>
        <position position="103"/>
    </location>
    <ligand>
        <name>FAD</name>
        <dbReference type="ChEBI" id="CHEBI:57692"/>
    </ligand>
</feature>
<feature type="binding site" evidence="2">
    <location>
        <position position="127"/>
    </location>
    <ligand>
        <name>FAD</name>
        <dbReference type="ChEBI" id="CHEBI:57692"/>
    </ligand>
</feature>
<feature type="binding site" evidence="2">
    <location>
        <position position="290"/>
    </location>
    <ligand>
        <name>FAD</name>
        <dbReference type="ChEBI" id="CHEBI:57692"/>
    </ligand>
</feature>
<feature type="binding site" evidence="2">
    <location>
        <begin position="302"/>
        <end position="303"/>
    </location>
    <ligand>
        <name>FAD</name>
        <dbReference type="ChEBI" id="CHEBI:57692"/>
    </ligand>
</feature>
<organism>
    <name type="scientific">Mycobacterium tuberculosis (strain CDC 1551 / Oshkosh)</name>
    <dbReference type="NCBI Taxonomy" id="83331"/>
    <lineage>
        <taxon>Bacteria</taxon>
        <taxon>Bacillati</taxon>
        <taxon>Actinomycetota</taxon>
        <taxon>Actinomycetes</taxon>
        <taxon>Mycobacteriales</taxon>
        <taxon>Mycobacteriaceae</taxon>
        <taxon>Mycobacterium</taxon>
        <taxon>Mycobacterium tuberculosis complex</taxon>
    </lineage>
</organism>
<gene>
    <name evidence="1" type="primary">menJ</name>
    <name type="ordered locus">MT0587</name>
</gene>
<evidence type="ECO:0000250" key="1">
    <source>
        <dbReference type="UniProtKB" id="P9WNY9"/>
    </source>
</evidence>
<evidence type="ECO:0000250" key="2">
    <source>
        <dbReference type="UniProtKB" id="Q9HKS9"/>
    </source>
</evidence>
<evidence type="ECO:0000305" key="3"/>
<sequence>MSVDDSADVVVVGAGPAGSAAAAWAARAGRDVLVIDTATFPRDKPCGDGLTPRAVAELHQLGLGKWLADHIRHRGLRMSGFGGEVEVDWPGPSFPSYGSAVARLELDDRIRKVAEDTGARMLLGAKAVAVHHDSSRRVVSLTLADGTEVGCRQLIVADGARSPLGRKLGRRWHRETVYGVAVRGYLSTAYSDDPWLTSHLELRSPDGAVLPGYGWIFPLGNGEVNIGVGALSTSRRPADLALRPLISYYTDLRRDEWGFTGQPRAVSSALLPMGGAVSGVAGSNWMLIGDAAACVNPLNGEGIDYGLETGRLAAELLDSRDLARLWPSLLADRYGRGFSVARRLALLLTFPRFLPTTGPITMRSTALMNIAVRVMSNLVTDDDRDWVARVWRGGGQLSRLVDRRPPFS</sequence>
<dbReference type="EC" id="1.3.99.38" evidence="1"/>
<dbReference type="EMBL" id="AE000516">
    <property type="protein sequence ID" value="AAK44810.1"/>
    <property type="molecule type" value="Genomic_DNA"/>
</dbReference>
<dbReference type="PIR" id="D70549">
    <property type="entry name" value="D70549"/>
</dbReference>
<dbReference type="RefSeq" id="WP_003402939.1">
    <property type="nucleotide sequence ID" value="NZ_KK341227.1"/>
</dbReference>
<dbReference type="SMR" id="P9WNY8"/>
<dbReference type="KEGG" id="mtc:MT0587"/>
<dbReference type="PATRIC" id="fig|83331.31.peg.618"/>
<dbReference type="HOGENOM" id="CLU_024648_5_2_11"/>
<dbReference type="UniPathway" id="UPA00079"/>
<dbReference type="Proteomes" id="UP000001020">
    <property type="component" value="Chromosome"/>
</dbReference>
<dbReference type="GO" id="GO:0071949">
    <property type="term" value="F:FAD binding"/>
    <property type="evidence" value="ECO:0007669"/>
    <property type="project" value="InterPro"/>
</dbReference>
<dbReference type="GO" id="GO:0016628">
    <property type="term" value="F:oxidoreductase activity, acting on the CH-CH group of donors, NAD or NADP as acceptor"/>
    <property type="evidence" value="ECO:0007669"/>
    <property type="project" value="InterPro"/>
</dbReference>
<dbReference type="GO" id="GO:0009234">
    <property type="term" value="P:menaquinone biosynthetic process"/>
    <property type="evidence" value="ECO:0007669"/>
    <property type="project" value="UniProtKB-UniPathway"/>
</dbReference>
<dbReference type="FunFam" id="3.50.50.60:FF:000364">
    <property type="entry name" value="Possible oxidoreductase"/>
    <property type="match status" value="1"/>
</dbReference>
<dbReference type="Gene3D" id="3.50.50.60">
    <property type="entry name" value="FAD/NAD(P)-binding domain"/>
    <property type="match status" value="1"/>
</dbReference>
<dbReference type="InterPro" id="IPR002938">
    <property type="entry name" value="FAD-bd"/>
</dbReference>
<dbReference type="InterPro" id="IPR036188">
    <property type="entry name" value="FAD/NAD-bd_sf"/>
</dbReference>
<dbReference type="InterPro" id="IPR011777">
    <property type="entry name" value="Geranylgeranyl_Rdtase_fam"/>
</dbReference>
<dbReference type="InterPro" id="IPR050407">
    <property type="entry name" value="Geranylgeranyl_reductase"/>
</dbReference>
<dbReference type="InterPro" id="IPR054880">
    <property type="entry name" value="MkRedMenJ"/>
</dbReference>
<dbReference type="NCBIfam" id="TIGR02032">
    <property type="entry name" value="GG-red-SF"/>
    <property type="match status" value="1"/>
</dbReference>
<dbReference type="NCBIfam" id="NF045655">
    <property type="entry name" value="MkRedMenJ"/>
    <property type="match status" value="1"/>
</dbReference>
<dbReference type="PANTHER" id="PTHR42685:SF22">
    <property type="entry name" value="CONDITIONED MEDIUM FACTOR RECEPTOR 1"/>
    <property type="match status" value="1"/>
</dbReference>
<dbReference type="PANTHER" id="PTHR42685">
    <property type="entry name" value="GERANYLGERANYL DIPHOSPHATE REDUCTASE"/>
    <property type="match status" value="1"/>
</dbReference>
<dbReference type="Pfam" id="PF01494">
    <property type="entry name" value="FAD_binding_3"/>
    <property type="match status" value="1"/>
</dbReference>
<dbReference type="PRINTS" id="PR00420">
    <property type="entry name" value="RNGMNOXGNASE"/>
</dbReference>
<dbReference type="SUPFAM" id="SSF51905">
    <property type="entry name" value="FAD/NAD(P)-binding domain"/>
    <property type="match status" value="1"/>
</dbReference>
<reference key="1">
    <citation type="journal article" date="2002" name="J. Bacteriol.">
        <title>Whole-genome comparison of Mycobacterium tuberculosis clinical and laboratory strains.</title>
        <authorList>
            <person name="Fleischmann R.D."/>
            <person name="Alland D."/>
            <person name="Eisen J.A."/>
            <person name="Carpenter L."/>
            <person name="White O."/>
            <person name="Peterson J.D."/>
            <person name="DeBoy R.T."/>
            <person name="Dodson R.J."/>
            <person name="Gwinn M.L."/>
            <person name="Haft D.H."/>
            <person name="Hickey E.K."/>
            <person name="Kolonay J.F."/>
            <person name="Nelson W.C."/>
            <person name="Umayam L.A."/>
            <person name="Ermolaeva M.D."/>
            <person name="Salzberg S.L."/>
            <person name="Delcher A."/>
            <person name="Utterback T.R."/>
            <person name="Weidman J.F."/>
            <person name="Khouri H.M."/>
            <person name="Gill J."/>
            <person name="Mikula A."/>
            <person name="Bishai W."/>
            <person name="Jacobs W.R. Jr."/>
            <person name="Venter J.C."/>
            <person name="Fraser C.M."/>
        </authorList>
    </citation>
    <scope>NUCLEOTIDE SEQUENCE [LARGE SCALE GENOMIC DNA]</scope>
    <source>
        <strain>CDC 1551 / Oshkosh</strain>
    </source>
</reference>
<name>MENJ_MYCTO</name>